<dbReference type="EMBL" id="AK129171">
    <property type="protein sequence ID" value="BAC97981.1"/>
    <property type="status" value="ALT_INIT"/>
    <property type="molecule type" value="mRNA"/>
</dbReference>
<dbReference type="EMBL" id="BC022921">
    <property type="protein sequence ID" value="AAH22921.1"/>
    <property type="molecule type" value="mRNA"/>
</dbReference>
<dbReference type="EMBL" id="AK035081">
    <property type="protein sequence ID" value="BAC28937.1"/>
    <property type="molecule type" value="mRNA"/>
</dbReference>
<dbReference type="EMBL" id="AK036569">
    <property type="protein sequence ID" value="BAC29482.1"/>
    <property type="molecule type" value="mRNA"/>
</dbReference>
<dbReference type="EMBL" id="AK087388">
    <property type="protein sequence ID" value="BAC39856.1"/>
    <property type="status" value="ALT_INIT"/>
    <property type="molecule type" value="mRNA"/>
</dbReference>
<dbReference type="CCDS" id="CCDS38432.1">
    <molecule id="Q8R1X6-1"/>
</dbReference>
<dbReference type="CCDS" id="CCDS50908.1">
    <molecule id="Q8R1X6-2"/>
</dbReference>
<dbReference type="RefSeq" id="NP_001138459.1">
    <molecule id="Q8R1X6-1"/>
    <property type="nucleotide sequence ID" value="NM_001144987.1"/>
</dbReference>
<dbReference type="RefSeq" id="NP_001138460.1">
    <molecule id="Q8R1X6-2"/>
    <property type="nucleotide sequence ID" value="NM_001144988.1"/>
</dbReference>
<dbReference type="RefSeq" id="NP_659144.1">
    <molecule id="Q8R1X6-1"/>
    <property type="nucleotide sequence ID" value="NM_144895.2"/>
</dbReference>
<dbReference type="RefSeq" id="XP_006501383.1">
    <molecule id="Q8R1X6-1"/>
    <property type="nucleotide sequence ID" value="XM_006501320.4"/>
</dbReference>
<dbReference type="RefSeq" id="XP_030108422.1">
    <molecule id="Q8R1X6-2"/>
    <property type="nucleotide sequence ID" value="XM_030252562.2"/>
</dbReference>
<dbReference type="RefSeq" id="XP_036018927.1">
    <molecule id="Q8R1X6-1"/>
    <property type="nucleotide sequence ID" value="XM_036163034.1"/>
</dbReference>
<dbReference type="RefSeq" id="XP_036018928.1">
    <molecule id="Q8R1X6-1"/>
    <property type="nucleotide sequence ID" value="XM_036163035.1"/>
</dbReference>
<dbReference type="RefSeq" id="XP_036018929.1">
    <molecule id="Q8R1X6-2"/>
    <property type="nucleotide sequence ID" value="XM_036163036.1"/>
</dbReference>
<dbReference type="SMR" id="Q8R1X6"/>
<dbReference type="BioGRID" id="230829">
    <property type="interactions" value="18"/>
</dbReference>
<dbReference type="FunCoup" id="Q8R1X6">
    <property type="interactions" value="2157"/>
</dbReference>
<dbReference type="STRING" id="10090.ENSMUSP00000113621"/>
<dbReference type="GlyGen" id="Q8R1X6">
    <property type="glycosylation" value="3 sites, 1 N-linked glycan (1 site), 1 O-linked glycan (2 sites)"/>
</dbReference>
<dbReference type="iPTMnet" id="Q8R1X6"/>
<dbReference type="PhosphoSitePlus" id="Q8R1X6"/>
<dbReference type="SwissPalm" id="Q8R1X6"/>
<dbReference type="PaxDb" id="10090-ENSMUSP00000113621"/>
<dbReference type="PeptideAtlas" id="Q8R1X6"/>
<dbReference type="ProteomicsDB" id="263310">
    <molecule id="Q8R1X6-1"/>
</dbReference>
<dbReference type="ProteomicsDB" id="263311">
    <molecule id="Q8R1X6-2"/>
</dbReference>
<dbReference type="Pumba" id="Q8R1X6"/>
<dbReference type="Antibodypedia" id="42112">
    <property type="antibodies" value="203 antibodies from 30 providers"/>
</dbReference>
<dbReference type="Ensembl" id="ENSMUST00000044116.14">
    <molecule id="Q8R1X6-1"/>
    <property type="protein sequence ID" value="ENSMUSP00000042367.8"/>
    <property type="gene ID" value="ENSMUSG00000036580.16"/>
</dbReference>
<dbReference type="Ensembl" id="ENSMUST00000107971.9">
    <molecule id="Q8R1X6-2"/>
    <property type="protein sequence ID" value="ENSMUSP00000103605.3"/>
    <property type="gene ID" value="ENSMUSG00000036580.16"/>
</dbReference>
<dbReference type="Ensembl" id="ENSMUST00000118118.8">
    <molecule id="Q8R1X6-1"/>
    <property type="protein sequence ID" value="ENSMUSP00000113621.2"/>
    <property type="gene ID" value="ENSMUSG00000036580.16"/>
</dbReference>
<dbReference type="GeneID" id="229285"/>
<dbReference type="KEGG" id="mmu:229285"/>
<dbReference type="UCSC" id="uc008pga.2">
    <molecule id="Q8R1X6-1"/>
    <property type="organism name" value="mouse"/>
</dbReference>
<dbReference type="UCSC" id="uc008pgc.2">
    <molecule id="Q8R1X6-2"/>
    <property type="organism name" value="mouse"/>
</dbReference>
<dbReference type="AGR" id="MGI:2139806"/>
<dbReference type="CTD" id="23111"/>
<dbReference type="MGI" id="MGI:2139806">
    <property type="gene designation" value="Spart"/>
</dbReference>
<dbReference type="VEuPathDB" id="HostDB:ENSMUSG00000036580"/>
<dbReference type="eggNOG" id="KOG2709">
    <property type="taxonomic scope" value="Eukaryota"/>
</dbReference>
<dbReference type="GeneTree" id="ENSGT00390000012235"/>
<dbReference type="InParanoid" id="Q8R1X6"/>
<dbReference type="OMA" id="WQGMECA"/>
<dbReference type="OrthoDB" id="20821at2759"/>
<dbReference type="PhylomeDB" id="Q8R1X6"/>
<dbReference type="TreeFam" id="TF105252"/>
<dbReference type="BioGRID-ORCS" id="229285">
    <property type="hits" value="1 hit in 77 CRISPR screens"/>
</dbReference>
<dbReference type="ChiTaRS" id="Spg20">
    <property type="organism name" value="mouse"/>
</dbReference>
<dbReference type="PRO" id="PR:Q8R1X6"/>
<dbReference type="Proteomes" id="UP000000589">
    <property type="component" value="Chromosome 3"/>
</dbReference>
<dbReference type="RNAct" id="Q8R1X6">
    <property type="molecule type" value="protein"/>
</dbReference>
<dbReference type="Bgee" id="ENSMUSG00000036580">
    <property type="expression patterns" value="Expressed in animal zygote and 269 other cell types or tissues"/>
</dbReference>
<dbReference type="ExpressionAtlas" id="Q8R1X6">
    <property type="expression patterns" value="baseline and differential"/>
</dbReference>
<dbReference type="GO" id="GO:0005829">
    <property type="term" value="C:cytosol"/>
    <property type="evidence" value="ECO:0007669"/>
    <property type="project" value="Ensembl"/>
</dbReference>
<dbReference type="GO" id="GO:0005811">
    <property type="term" value="C:lipid droplet"/>
    <property type="evidence" value="ECO:0000314"/>
    <property type="project" value="MGI"/>
</dbReference>
<dbReference type="GO" id="GO:0030496">
    <property type="term" value="C:midbody"/>
    <property type="evidence" value="ECO:0007669"/>
    <property type="project" value="UniProtKB-SubCell"/>
</dbReference>
<dbReference type="GO" id="GO:0005741">
    <property type="term" value="C:mitochondrial outer membrane"/>
    <property type="evidence" value="ECO:0000266"/>
    <property type="project" value="MGI"/>
</dbReference>
<dbReference type="GO" id="GO:0045202">
    <property type="term" value="C:synapse"/>
    <property type="evidence" value="ECO:0000314"/>
    <property type="project" value="MGI"/>
</dbReference>
<dbReference type="GO" id="GO:0008289">
    <property type="term" value="F:lipid binding"/>
    <property type="evidence" value="ECO:0000250"/>
    <property type="project" value="UniProtKB"/>
</dbReference>
<dbReference type="GO" id="GO:0031625">
    <property type="term" value="F:ubiquitin protein ligase binding"/>
    <property type="evidence" value="ECO:0007669"/>
    <property type="project" value="Ensembl"/>
</dbReference>
<dbReference type="GO" id="GO:0060612">
    <property type="term" value="P:adipose tissue development"/>
    <property type="evidence" value="ECO:0000315"/>
    <property type="project" value="MGI"/>
</dbReference>
<dbReference type="GO" id="GO:0030509">
    <property type="term" value="P:BMP signaling pathway"/>
    <property type="evidence" value="ECO:0000315"/>
    <property type="project" value="MGI"/>
</dbReference>
<dbReference type="GO" id="GO:0048669">
    <property type="term" value="P:collateral sprouting in absence of injury"/>
    <property type="evidence" value="ECO:0000315"/>
    <property type="project" value="MGI"/>
</dbReference>
<dbReference type="GO" id="GO:0016042">
    <property type="term" value="P:lipid catabolic process"/>
    <property type="evidence" value="ECO:0007669"/>
    <property type="project" value="UniProtKB-KW"/>
</dbReference>
<dbReference type="GO" id="GO:0034389">
    <property type="term" value="P:lipid droplet organization"/>
    <property type="evidence" value="ECO:0000315"/>
    <property type="project" value="MGI"/>
</dbReference>
<dbReference type="GO" id="GO:0006869">
    <property type="term" value="P:lipid transport"/>
    <property type="evidence" value="ECO:0000250"/>
    <property type="project" value="UniProtKB"/>
</dbReference>
<dbReference type="GO" id="GO:0061724">
    <property type="term" value="P:lipophagy"/>
    <property type="evidence" value="ECO:0000315"/>
    <property type="project" value="UniProtKB"/>
</dbReference>
<dbReference type="GO" id="GO:0061952">
    <property type="term" value="P:midbody abscission"/>
    <property type="evidence" value="ECO:0007669"/>
    <property type="project" value="Ensembl"/>
</dbReference>
<dbReference type="GO" id="GO:0030514">
    <property type="term" value="P:negative regulation of BMP signaling pathway"/>
    <property type="evidence" value="ECO:0000315"/>
    <property type="project" value="MGI"/>
</dbReference>
<dbReference type="GO" id="GO:0048698">
    <property type="term" value="P:negative regulation of collateral sprouting in absence of injury"/>
    <property type="evidence" value="ECO:0000315"/>
    <property type="project" value="MGI"/>
</dbReference>
<dbReference type="GO" id="GO:0050905">
    <property type="term" value="P:neuromuscular process"/>
    <property type="evidence" value="ECO:0000315"/>
    <property type="project" value="MGI"/>
</dbReference>
<dbReference type="GO" id="GO:0051881">
    <property type="term" value="P:regulation of mitochondrial membrane potential"/>
    <property type="evidence" value="ECO:0000266"/>
    <property type="project" value="MGI"/>
</dbReference>
<dbReference type="CDD" id="cd02679">
    <property type="entry name" value="MIT_spastin"/>
    <property type="match status" value="1"/>
</dbReference>
<dbReference type="FunFam" id="1.20.58.80:FF:000009">
    <property type="entry name" value="spartin isoform X1"/>
    <property type="match status" value="1"/>
</dbReference>
<dbReference type="Gene3D" id="1.20.58.80">
    <property type="entry name" value="Phosphotransferase system, lactose/cellobiose-type IIA subunit"/>
    <property type="match status" value="1"/>
</dbReference>
<dbReference type="InterPro" id="IPR007330">
    <property type="entry name" value="MIT_dom"/>
</dbReference>
<dbReference type="InterPro" id="IPR036181">
    <property type="entry name" value="MIT_dom_sf"/>
</dbReference>
<dbReference type="InterPro" id="IPR009686">
    <property type="entry name" value="Senescence/spartin_C"/>
</dbReference>
<dbReference type="InterPro" id="IPR045036">
    <property type="entry name" value="Spartin-like"/>
</dbReference>
<dbReference type="PANTHER" id="PTHR21068">
    <property type="entry name" value="SPARTIN"/>
    <property type="match status" value="1"/>
</dbReference>
<dbReference type="PANTHER" id="PTHR21068:SF43">
    <property type="entry name" value="SPARTIN"/>
    <property type="match status" value="1"/>
</dbReference>
<dbReference type="Pfam" id="PF06911">
    <property type="entry name" value="Senescence"/>
    <property type="match status" value="1"/>
</dbReference>
<dbReference type="SMART" id="SM00745">
    <property type="entry name" value="MIT"/>
    <property type="match status" value="1"/>
</dbReference>
<dbReference type="SUPFAM" id="SSF116846">
    <property type="entry name" value="MIT domain"/>
    <property type="match status" value="1"/>
</dbReference>
<comment type="function">
    <text evidence="1 4">Lipophagy receptor that plays an important role in lipid droplet (LD) turnover in motor neurons (PubMed:37443287). Localizes to LDs and interacts with components of the autophagy machinery, such as MAP1LC3A/C proteins to deliver LDs to autophagosomes for degradation via lipophagy. Lipid transfer protein required for lipid droplet degradation, including by lipophagy. Can bind and transfer all lipid species found in lipid droplets, from phospholipids to triglycerides and sterol esters but the direction of lipid transfer by spartin and its cargos are unknown. May be implicated in endosomal trafficking, or microtubule dynamics, or both. Participates in cytokinesis (By similarity).</text>
</comment>
<comment type="subunit">
    <text evidence="1">Interacts with ITCH and WWP1. Interacts (via MIT domain) with IST1; leading to the recruitment of SPART to midbodies. Interacts with MAP1LC3A and MAP1LC3C.</text>
</comment>
<comment type="subcellular location">
    <subcellularLocation>
        <location evidence="1">Cytoplasm</location>
    </subcellularLocation>
    <subcellularLocation>
        <location evidence="1">Midbody</location>
    </subcellularLocation>
    <subcellularLocation>
        <location evidence="1">Lipid droplet</location>
    </subcellularLocation>
    <text evidence="1">Transiently associated with endosomes. Colocalized with IST1 to the ends of Flemming bodies during cytokinesis.</text>
</comment>
<comment type="alternative products">
    <event type="alternative splicing"/>
    <isoform>
        <id>Q8R1X6-1</id>
        <name>1</name>
        <sequence type="displayed"/>
    </isoform>
    <isoform>
        <id>Q8R1X6-2</id>
        <name>2</name>
        <sequence type="described" ref="VSP_010934"/>
    </isoform>
</comment>
<comment type="tissue specificity">
    <text evidence="4">Brain (at protein level).</text>
</comment>
<comment type="domain">
    <text evidence="1">The senescence domain is required and sufficient for lipid transfer.</text>
</comment>
<comment type="PTM">
    <text evidence="1">Ubiquitinated; ubiquitination does not require ITCH and WWP1.</text>
</comment>
<comment type="sequence caution" evidence="7">
    <conflict type="erroneous initiation">
        <sequence resource="EMBL-CDS" id="BAC39856"/>
    </conflict>
</comment>
<comment type="sequence caution" evidence="7">
    <conflict type="erroneous initiation">
        <sequence resource="EMBL-CDS" id="BAC97981"/>
    </conflict>
</comment>
<organism>
    <name type="scientific">Mus musculus</name>
    <name type="common">Mouse</name>
    <dbReference type="NCBI Taxonomy" id="10090"/>
    <lineage>
        <taxon>Eukaryota</taxon>
        <taxon>Metazoa</taxon>
        <taxon>Chordata</taxon>
        <taxon>Craniata</taxon>
        <taxon>Vertebrata</taxon>
        <taxon>Euteleostomi</taxon>
        <taxon>Mammalia</taxon>
        <taxon>Eutheria</taxon>
        <taxon>Euarchontoglires</taxon>
        <taxon>Glires</taxon>
        <taxon>Rodentia</taxon>
        <taxon>Myomorpha</taxon>
        <taxon>Muroidea</taxon>
        <taxon>Muridae</taxon>
        <taxon>Murinae</taxon>
        <taxon>Mus</taxon>
        <taxon>Mus</taxon>
    </lineage>
</organism>
<proteinExistence type="evidence at protein level"/>
<feature type="chain" id="PRO_0000072120" description="Spartin">
    <location>
        <begin position="1"/>
        <end position="671"/>
    </location>
</feature>
<feature type="domain" description="MIT">
    <location>
        <begin position="16"/>
        <end position="94"/>
    </location>
</feature>
<feature type="domain" description="Senescence" evidence="2">
    <location>
        <begin position="431"/>
        <end position="615"/>
    </location>
</feature>
<feature type="region of interest" description="Disordered" evidence="3">
    <location>
        <begin position="110"/>
        <end position="175"/>
    </location>
</feature>
<feature type="region of interest" description="Ubiquitin-binding region (UBR) domain" evidence="1">
    <location>
        <begin position="190"/>
        <end position="385"/>
    </location>
</feature>
<feature type="region of interest" description="Disordered" evidence="3">
    <location>
        <begin position="346"/>
        <end position="421"/>
    </location>
</feature>
<feature type="region of interest" description="Required for localization to lipid droplets" evidence="1">
    <location>
        <begin position="435"/>
        <end position="507"/>
    </location>
</feature>
<feature type="region of interest" description="Disordered" evidence="3">
    <location>
        <begin position="635"/>
        <end position="671"/>
    </location>
</feature>
<feature type="short sequence motif" description="LC3-interacting region (LIR); mediates interaction with MAP1LC3A AND MAP1LC3C" evidence="1">
    <location>
        <begin position="193"/>
        <end position="200"/>
    </location>
</feature>
<feature type="compositionally biased region" description="Basic and acidic residues" evidence="3">
    <location>
        <begin position="118"/>
        <end position="128"/>
    </location>
</feature>
<feature type="compositionally biased region" description="Low complexity" evidence="3">
    <location>
        <begin position="143"/>
        <end position="158"/>
    </location>
</feature>
<feature type="compositionally biased region" description="Pro residues" evidence="3">
    <location>
        <begin position="159"/>
        <end position="174"/>
    </location>
</feature>
<feature type="compositionally biased region" description="Low complexity" evidence="3">
    <location>
        <begin position="369"/>
        <end position="379"/>
    </location>
</feature>
<feature type="compositionally biased region" description="Basic residues" evidence="3">
    <location>
        <begin position="384"/>
        <end position="393"/>
    </location>
</feature>
<feature type="compositionally biased region" description="Basic and acidic residues" evidence="3">
    <location>
        <begin position="650"/>
        <end position="671"/>
    </location>
</feature>
<feature type="modified residue" description="N-acetylmethionine" evidence="1">
    <location>
        <position position="1"/>
    </location>
</feature>
<feature type="modified residue" description="Phosphoserine" evidence="9 10">
    <location>
        <position position="126"/>
    </location>
</feature>
<feature type="modified residue" description="Phosphoserine" evidence="1">
    <location>
        <position position="474"/>
    </location>
</feature>
<feature type="cross-link" description="Glycyl lysine isopeptide (Lys-Gly) (interchain with G-Cter in ubiquitin)" evidence="1">
    <location>
        <position position="360"/>
    </location>
</feature>
<feature type="splice variant" id="VSP_010934" description="In isoform 2." evidence="5 6">
    <location>
        <begin position="337"/>
        <end position="393"/>
    </location>
</feature>
<feature type="sequence conflict" description="In Ref. 3; BAC28937." evidence="7" ref="3">
    <original>S</original>
    <variation>F</variation>
    <location>
        <position position="157"/>
    </location>
</feature>
<feature type="sequence conflict" description="In Ref. 3; BAC39856." evidence="7" ref="3">
    <original>R</original>
    <variation>P</variation>
    <location>
        <position position="264"/>
    </location>
</feature>
<feature type="sequence conflict" description="In Ref. 3; BAC39856." evidence="7" ref="3">
    <original>D</original>
    <variation>N</variation>
    <location>
        <position position="297"/>
    </location>
</feature>
<feature type="sequence conflict" description="In Ref. 3; BAC39856." evidence="7" ref="3">
    <original>DEFQIPGRSS</original>
    <variation>MNSKSLGDQA</variation>
    <location>
        <begin position="344"/>
        <end position="353"/>
    </location>
</feature>
<reference key="1">
    <citation type="journal article" date="2003" name="DNA Res.">
        <title>Prediction of the coding sequences of mouse homologues of KIAA gene: III. The complete nucleotide sequences of 500 mouse KIAA-homologous cDNAs identified by screening of terminal sequences of cDNA clones randomly sampled from size-fractionated libraries.</title>
        <authorList>
            <person name="Okazaki N."/>
            <person name="Kikuno R."/>
            <person name="Ohara R."/>
            <person name="Inamoto S."/>
            <person name="Koseki H."/>
            <person name="Hiraoka S."/>
            <person name="Saga Y."/>
            <person name="Nagase T."/>
            <person name="Ohara O."/>
            <person name="Koga H."/>
        </authorList>
    </citation>
    <scope>NUCLEOTIDE SEQUENCE [LARGE SCALE MRNA] (ISOFORM 2)</scope>
    <source>
        <tissue>Embryonic tail</tissue>
    </source>
</reference>
<reference key="2">
    <citation type="journal article" date="2004" name="Genome Res.">
        <title>The status, quality, and expansion of the NIH full-length cDNA project: the Mammalian Gene Collection (MGC).</title>
        <authorList>
            <consortium name="The MGC Project Team"/>
        </authorList>
    </citation>
    <scope>NUCLEOTIDE SEQUENCE [LARGE SCALE MRNA] (ISOFORM 1)</scope>
    <source>
        <tissue>Kidney</tissue>
    </source>
</reference>
<reference key="3">
    <citation type="journal article" date="2005" name="Science">
        <title>The transcriptional landscape of the mammalian genome.</title>
        <authorList>
            <person name="Carninci P."/>
            <person name="Kasukawa T."/>
            <person name="Katayama S."/>
            <person name="Gough J."/>
            <person name="Frith M.C."/>
            <person name="Maeda N."/>
            <person name="Oyama R."/>
            <person name="Ravasi T."/>
            <person name="Lenhard B."/>
            <person name="Wells C."/>
            <person name="Kodzius R."/>
            <person name="Shimokawa K."/>
            <person name="Bajic V.B."/>
            <person name="Brenner S.E."/>
            <person name="Batalov S."/>
            <person name="Forrest A.R."/>
            <person name="Zavolan M."/>
            <person name="Davis M.J."/>
            <person name="Wilming L.G."/>
            <person name="Aidinis V."/>
            <person name="Allen J.E."/>
            <person name="Ambesi-Impiombato A."/>
            <person name="Apweiler R."/>
            <person name="Aturaliya R.N."/>
            <person name="Bailey T.L."/>
            <person name="Bansal M."/>
            <person name="Baxter L."/>
            <person name="Beisel K.W."/>
            <person name="Bersano T."/>
            <person name="Bono H."/>
            <person name="Chalk A.M."/>
            <person name="Chiu K.P."/>
            <person name="Choudhary V."/>
            <person name="Christoffels A."/>
            <person name="Clutterbuck D.R."/>
            <person name="Crowe M.L."/>
            <person name="Dalla E."/>
            <person name="Dalrymple B.P."/>
            <person name="de Bono B."/>
            <person name="Della Gatta G."/>
            <person name="di Bernardo D."/>
            <person name="Down T."/>
            <person name="Engstrom P."/>
            <person name="Fagiolini M."/>
            <person name="Faulkner G."/>
            <person name="Fletcher C.F."/>
            <person name="Fukushima T."/>
            <person name="Furuno M."/>
            <person name="Futaki S."/>
            <person name="Gariboldi M."/>
            <person name="Georgii-Hemming P."/>
            <person name="Gingeras T.R."/>
            <person name="Gojobori T."/>
            <person name="Green R.E."/>
            <person name="Gustincich S."/>
            <person name="Harbers M."/>
            <person name="Hayashi Y."/>
            <person name="Hensch T.K."/>
            <person name="Hirokawa N."/>
            <person name="Hill D."/>
            <person name="Huminiecki L."/>
            <person name="Iacono M."/>
            <person name="Ikeo K."/>
            <person name="Iwama A."/>
            <person name="Ishikawa T."/>
            <person name="Jakt M."/>
            <person name="Kanapin A."/>
            <person name="Katoh M."/>
            <person name="Kawasawa Y."/>
            <person name="Kelso J."/>
            <person name="Kitamura H."/>
            <person name="Kitano H."/>
            <person name="Kollias G."/>
            <person name="Krishnan S.P."/>
            <person name="Kruger A."/>
            <person name="Kummerfeld S.K."/>
            <person name="Kurochkin I.V."/>
            <person name="Lareau L.F."/>
            <person name="Lazarevic D."/>
            <person name="Lipovich L."/>
            <person name="Liu J."/>
            <person name="Liuni S."/>
            <person name="McWilliam S."/>
            <person name="Madan Babu M."/>
            <person name="Madera M."/>
            <person name="Marchionni L."/>
            <person name="Matsuda H."/>
            <person name="Matsuzawa S."/>
            <person name="Miki H."/>
            <person name="Mignone F."/>
            <person name="Miyake S."/>
            <person name="Morris K."/>
            <person name="Mottagui-Tabar S."/>
            <person name="Mulder N."/>
            <person name="Nakano N."/>
            <person name="Nakauchi H."/>
            <person name="Ng P."/>
            <person name="Nilsson R."/>
            <person name="Nishiguchi S."/>
            <person name="Nishikawa S."/>
            <person name="Nori F."/>
            <person name="Ohara O."/>
            <person name="Okazaki Y."/>
            <person name="Orlando V."/>
            <person name="Pang K.C."/>
            <person name="Pavan W.J."/>
            <person name="Pavesi G."/>
            <person name="Pesole G."/>
            <person name="Petrovsky N."/>
            <person name="Piazza S."/>
            <person name="Reed J."/>
            <person name="Reid J.F."/>
            <person name="Ring B.Z."/>
            <person name="Ringwald M."/>
            <person name="Rost B."/>
            <person name="Ruan Y."/>
            <person name="Salzberg S.L."/>
            <person name="Sandelin A."/>
            <person name="Schneider C."/>
            <person name="Schoenbach C."/>
            <person name="Sekiguchi K."/>
            <person name="Semple C.A."/>
            <person name="Seno S."/>
            <person name="Sessa L."/>
            <person name="Sheng Y."/>
            <person name="Shibata Y."/>
            <person name="Shimada H."/>
            <person name="Shimada K."/>
            <person name="Silva D."/>
            <person name="Sinclair B."/>
            <person name="Sperling S."/>
            <person name="Stupka E."/>
            <person name="Sugiura K."/>
            <person name="Sultana R."/>
            <person name="Takenaka Y."/>
            <person name="Taki K."/>
            <person name="Tammoja K."/>
            <person name="Tan S.L."/>
            <person name="Tang S."/>
            <person name="Taylor M.S."/>
            <person name="Tegner J."/>
            <person name="Teichmann S.A."/>
            <person name="Ueda H.R."/>
            <person name="van Nimwegen E."/>
            <person name="Verardo R."/>
            <person name="Wei C.L."/>
            <person name="Yagi K."/>
            <person name="Yamanishi H."/>
            <person name="Zabarovsky E."/>
            <person name="Zhu S."/>
            <person name="Zimmer A."/>
            <person name="Hide W."/>
            <person name="Bult C."/>
            <person name="Grimmond S.M."/>
            <person name="Teasdale R.D."/>
            <person name="Liu E.T."/>
            <person name="Brusic V."/>
            <person name="Quackenbush J."/>
            <person name="Wahlestedt C."/>
            <person name="Mattick J.S."/>
            <person name="Hume D.A."/>
            <person name="Kai C."/>
            <person name="Sasaki D."/>
            <person name="Tomaru Y."/>
            <person name="Fukuda S."/>
            <person name="Kanamori-Katayama M."/>
            <person name="Suzuki M."/>
            <person name="Aoki J."/>
            <person name="Arakawa T."/>
            <person name="Iida J."/>
            <person name="Imamura K."/>
            <person name="Itoh M."/>
            <person name="Kato T."/>
            <person name="Kawaji H."/>
            <person name="Kawagashira N."/>
            <person name="Kawashima T."/>
            <person name="Kojima M."/>
            <person name="Kondo S."/>
            <person name="Konno H."/>
            <person name="Nakano K."/>
            <person name="Ninomiya N."/>
            <person name="Nishio T."/>
            <person name="Okada M."/>
            <person name="Plessy C."/>
            <person name="Shibata K."/>
            <person name="Shiraki T."/>
            <person name="Suzuki S."/>
            <person name="Tagami M."/>
            <person name="Waki K."/>
            <person name="Watahiki A."/>
            <person name="Okamura-Oho Y."/>
            <person name="Suzuki H."/>
            <person name="Kawai J."/>
            <person name="Hayashizaki Y."/>
        </authorList>
    </citation>
    <scope>NUCLEOTIDE SEQUENCE [LARGE SCALE MRNA] OF 11-671 (ISOFORM 2)</scope>
    <source>
        <strain>C57BL/6J</strain>
        <tissue>Bone</tissue>
        <tissue>Embryo</tissue>
        <tissue>Eye</tissue>
    </source>
</reference>
<reference key="4">
    <citation type="journal article" date="2007" name="Proc. Natl. Acad. Sci. U.S.A.">
        <title>Large-scale phosphorylation analysis of mouse liver.</title>
        <authorList>
            <person name="Villen J."/>
            <person name="Beausoleil S.A."/>
            <person name="Gerber S.A."/>
            <person name="Gygi S.P."/>
        </authorList>
    </citation>
    <scope>PHOSPHORYLATION [LARGE SCALE ANALYSIS] AT SER-126</scope>
    <scope>IDENTIFICATION BY MASS SPECTROMETRY [LARGE SCALE ANALYSIS]</scope>
    <source>
        <tissue>Liver</tissue>
    </source>
</reference>
<reference key="5">
    <citation type="journal article" date="2010" name="Cell">
        <title>A tissue-specific atlas of mouse protein phosphorylation and expression.</title>
        <authorList>
            <person name="Huttlin E.L."/>
            <person name="Jedrychowski M.P."/>
            <person name="Elias J.E."/>
            <person name="Goswami T."/>
            <person name="Rad R."/>
            <person name="Beausoleil S.A."/>
            <person name="Villen J."/>
            <person name="Haas W."/>
            <person name="Sowa M.E."/>
            <person name="Gygi S.P."/>
        </authorList>
    </citation>
    <scope>PHOSPHORYLATION [LARGE SCALE ANALYSIS] AT SER-126</scope>
    <scope>IDENTIFICATION BY MASS SPECTROMETRY [LARGE SCALE ANALYSIS]</scope>
    <source>
        <tissue>Brain</tissue>
        <tissue>Heart</tissue>
        <tissue>Liver</tissue>
        <tissue>Lung</tissue>
        <tissue>Pancreas</tissue>
        <tissue>Testis</tissue>
    </source>
</reference>
<reference key="6">
    <citation type="journal article" date="2023" name="Nat. Cell Biol.">
        <title>The Troyer syndrome protein spartin mediates selective autophagy of lipid droplets.</title>
        <authorList>
            <person name="Chung J."/>
            <person name="Park J."/>
            <person name="Lai Z.W."/>
            <person name="Lambert T.J."/>
            <person name="Richards R.C."/>
            <person name="Zhang J."/>
            <person name="Walther T.C."/>
            <person name="Farese R.V. Jr."/>
        </authorList>
    </citation>
    <scope>FUNCTION</scope>
    <scope>TISSUE SPECIFICITY</scope>
</reference>
<protein>
    <recommendedName>
        <fullName evidence="7">Spartin</fullName>
    </recommendedName>
</protein>
<accession>Q8R1X6</accession>
<accession>Q6ZQ87</accession>
<accession>Q8BJD3</accession>
<accession>Q8BM37</accession>
<accession>Q8BZ63</accession>
<evidence type="ECO:0000250" key="1">
    <source>
        <dbReference type="UniProtKB" id="Q8N0X7"/>
    </source>
</evidence>
<evidence type="ECO:0000255" key="2"/>
<evidence type="ECO:0000256" key="3">
    <source>
        <dbReference type="SAM" id="MobiDB-lite"/>
    </source>
</evidence>
<evidence type="ECO:0000269" key="4">
    <source>
    </source>
</evidence>
<evidence type="ECO:0000303" key="5">
    <source>
    </source>
</evidence>
<evidence type="ECO:0000303" key="6">
    <source>
    </source>
</evidence>
<evidence type="ECO:0000305" key="7"/>
<evidence type="ECO:0000312" key="8">
    <source>
        <dbReference type="MGI" id="MGI:2139806"/>
    </source>
</evidence>
<evidence type="ECO:0007744" key="9">
    <source>
    </source>
</evidence>
<evidence type="ECO:0007744" key="10">
    <source>
    </source>
</evidence>
<keyword id="KW-0007">Acetylation</keyword>
<keyword id="KW-0025">Alternative splicing</keyword>
<keyword id="KW-0963">Cytoplasm</keyword>
<keyword id="KW-1017">Isopeptide bond</keyword>
<keyword id="KW-0442">Lipid degradation</keyword>
<keyword id="KW-0551">Lipid droplet</keyword>
<keyword id="KW-0443">Lipid metabolism</keyword>
<keyword id="KW-0445">Lipid transport</keyword>
<keyword id="KW-0446">Lipid-binding</keyword>
<keyword id="KW-0597">Phosphoprotein</keyword>
<keyword id="KW-1185">Reference proteome</keyword>
<keyword id="KW-0813">Transport</keyword>
<keyword id="KW-0832">Ubl conjugation</keyword>
<gene>
    <name evidence="1" type="primary">Spart</name>
    <name type="synonym">Kiaa0610</name>
    <name evidence="8" type="synonym">Spg20</name>
</gene>
<name>SPART_MOUSE</name>
<sequence>MEREPENGEPAEIKIIKEAYEKAFMFVNKGLNTDELGQKEEAKNYYKQGIGHLLRGISIAAAEPGHTGPAWEAARQMQQKMKETLQNVRTRLEILEKGLATSLRNDLQDVPKLYPEFPPKDACKKSPEQESVSTAPQRAEVDGSASAACAGPSGAPSALPVPSPSCPAEAPPAYSPQAAEGHYTVSYGTDSGEFSSVGEDFYRNRSQPPPLETLGLDADELILIPNGVQIFFVNPAGEVSAPSYPGYLRIVRFLDNSLDTVLNRPPGFLQVCDWLYPLVPDRSPVLKCTVGAYMFPDTMLQAAGCFVGVVLSSELPEDDRELFEDLLRQMSDLRLQANWNREEDEFQIPGRSSHPSEPPKEASGTDVRQSSSSGSSIDQGSKDARHKGKRGKKTKDSSEEVNLSQIVPCEPSSEEKSKELPEWSEKVAHNILSGASWVSWGLVKGAEFTGKAIQKGASKLRERIQPEEKPVEVSPAVTRGLYIAKQATGGAAKVSQLLVDGVCTVANCVGKELAPHVKKHGSKLVPESLKRDKDGKSALDGAMVVAASSVQGFSTVWQGLECAAKCIVNNVSAETVQTVRYKYGHNAGEATHNAVDSAINVGLTAYNIDNIGIKAMVKKTAKQTGHTLLEDYQIVERPQRESQGGATSTEGRRDIGKQVEEEKPGAGKKDK</sequence>